<sequence>MKVVQGDYRGEGLKIAVVVPRFNDLVTSKLLEGALDGLKRHGVSDENITVVRIPGSMEAIYTLKRLLDLGVHDAIIVLGAVIRGETYHFNVVANEIGKAVAQFNMTSDIPIVFGVLTTDTLEQALNRAGAKSGNKGFEAAMVAIEMANLRKRLRRDVFESDSNGR</sequence>
<name>RISB_THESQ</name>
<keyword id="KW-0686">Riboflavin biosynthesis</keyword>
<keyword id="KW-0808">Transferase</keyword>
<proteinExistence type="inferred from homology"/>
<evidence type="ECO:0000255" key="1">
    <source>
        <dbReference type="HAMAP-Rule" id="MF_00178"/>
    </source>
</evidence>
<feature type="chain" id="PRO_1000098245" description="6,7-dimethyl-8-ribityllumazine synthase">
    <location>
        <begin position="1"/>
        <end position="165"/>
    </location>
</feature>
<feature type="active site" description="Proton donor" evidence="1">
    <location>
        <position position="88"/>
    </location>
</feature>
<feature type="binding site" evidence="1">
    <location>
        <position position="22"/>
    </location>
    <ligand>
        <name>5-amino-6-(D-ribitylamino)uracil</name>
        <dbReference type="ChEBI" id="CHEBI:15934"/>
    </ligand>
</feature>
<feature type="binding site" evidence="1">
    <location>
        <begin position="56"/>
        <end position="58"/>
    </location>
    <ligand>
        <name>5-amino-6-(D-ribitylamino)uracil</name>
        <dbReference type="ChEBI" id="CHEBI:15934"/>
    </ligand>
</feature>
<feature type="binding site" evidence="1">
    <location>
        <begin position="80"/>
        <end position="82"/>
    </location>
    <ligand>
        <name>5-amino-6-(D-ribitylamino)uracil</name>
        <dbReference type="ChEBI" id="CHEBI:15934"/>
    </ligand>
</feature>
<feature type="binding site" evidence="1">
    <location>
        <begin position="85"/>
        <end position="86"/>
    </location>
    <ligand>
        <name>(2S)-2-hydroxy-3-oxobutyl phosphate</name>
        <dbReference type="ChEBI" id="CHEBI:58830"/>
    </ligand>
</feature>
<feature type="binding site" evidence="1">
    <location>
        <position position="113"/>
    </location>
    <ligand>
        <name>5-amino-6-(D-ribitylamino)uracil</name>
        <dbReference type="ChEBI" id="CHEBI:15934"/>
    </ligand>
</feature>
<feature type="binding site" evidence="1">
    <location>
        <position position="127"/>
    </location>
    <ligand>
        <name>(2S)-2-hydroxy-3-oxobutyl phosphate</name>
        <dbReference type="ChEBI" id="CHEBI:58830"/>
    </ligand>
</feature>
<comment type="function">
    <text evidence="1">Catalyzes the formation of 6,7-dimethyl-8-ribityllumazine by condensation of 5-amino-6-(D-ribitylamino)uracil with 3,4-dihydroxy-2-butanone 4-phosphate. This is the penultimate step in the biosynthesis of riboflavin.</text>
</comment>
<comment type="catalytic activity">
    <reaction evidence="1">
        <text>(2S)-2-hydroxy-3-oxobutyl phosphate + 5-amino-6-(D-ribitylamino)uracil = 6,7-dimethyl-8-(1-D-ribityl)lumazine + phosphate + 2 H2O + H(+)</text>
        <dbReference type="Rhea" id="RHEA:26152"/>
        <dbReference type="ChEBI" id="CHEBI:15377"/>
        <dbReference type="ChEBI" id="CHEBI:15378"/>
        <dbReference type="ChEBI" id="CHEBI:15934"/>
        <dbReference type="ChEBI" id="CHEBI:43474"/>
        <dbReference type="ChEBI" id="CHEBI:58201"/>
        <dbReference type="ChEBI" id="CHEBI:58830"/>
        <dbReference type="EC" id="2.5.1.78"/>
    </reaction>
</comment>
<comment type="pathway">
    <text evidence="1">Cofactor biosynthesis; riboflavin biosynthesis; riboflavin from 2-hydroxy-3-oxobutyl phosphate and 5-amino-6-(D-ribitylamino)uracil: step 1/2.</text>
</comment>
<comment type="similarity">
    <text evidence="1">Belongs to the DMRL synthase family.</text>
</comment>
<dbReference type="EC" id="2.5.1.78" evidence="1"/>
<dbReference type="EMBL" id="CP000969">
    <property type="protein sequence ID" value="ACB09346.1"/>
    <property type="molecule type" value="Genomic_DNA"/>
</dbReference>
<dbReference type="RefSeq" id="WP_004082371.1">
    <property type="nucleotide sequence ID" value="NC_010483.1"/>
</dbReference>
<dbReference type="SMR" id="B1LAJ8"/>
<dbReference type="KEGG" id="trq:TRQ2_0996"/>
<dbReference type="HOGENOM" id="CLU_089358_1_1_0"/>
<dbReference type="UniPathway" id="UPA00275">
    <property type="reaction ID" value="UER00404"/>
</dbReference>
<dbReference type="Proteomes" id="UP000001687">
    <property type="component" value="Chromosome"/>
</dbReference>
<dbReference type="GO" id="GO:0005829">
    <property type="term" value="C:cytosol"/>
    <property type="evidence" value="ECO:0007669"/>
    <property type="project" value="TreeGrafter"/>
</dbReference>
<dbReference type="GO" id="GO:0009349">
    <property type="term" value="C:riboflavin synthase complex"/>
    <property type="evidence" value="ECO:0007669"/>
    <property type="project" value="InterPro"/>
</dbReference>
<dbReference type="GO" id="GO:0000906">
    <property type="term" value="F:6,7-dimethyl-8-ribityllumazine synthase activity"/>
    <property type="evidence" value="ECO:0007669"/>
    <property type="project" value="UniProtKB-UniRule"/>
</dbReference>
<dbReference type="GO" id="GO:0009231">
    <property type="term" value="P:riboflavin biosynthetic process"/>
    <property type="evidence" value="ECO:0007669"/>
    <property type="project" value="UniProtKB-UniRule"/>
</dbReference>
<dbReference type="CDD" id="cd09209">
    <property type="entry name" value="Lumazine_synthase-I"/>
    <property type="match status" value="1"/>
</dbReference>
<dbReference type="FunFam" id="3.40.50.960:FF:000001">
    <property type="entry name" value="6,7-dimethyl-8-ribityllumazine synthase"/>
    <property type="match status" value="1"/>
</dbReference>
<dbReference type="Gene3D" id="3.40.50.960">
    <property type="entry name" value="Lumazine/riboflavin synthase"/>
    <property type="match status" value="1"/>
</dbReference>
<dbReference type="HAMAP" id="MF_00178">
    <property type="entry name" value="Lumazine_synth"/>
    <property type="match status" value="1"/>
</dbReference>
<dbReference type="InterPro" id="IPR034964">
    <property type="entry name" value="LS"/>
</dbReference>
<dbReference type="InterPro" id="IPR002180">
    <property type="entry name" value="LS/RS"/>
</dbReference>
<dbReference type="InterPro" id="IPR036467">
    <property type="entry name" value="LS/RS_sf"/>
</dbReference>
<dbReference type="NCBIfam" id="TIGR00114">
    <property type="entry name" value="lumazine-synth"/>
    <property type="match status" value="1"/>
</dbReference>
<dbReference type="PANTHER" id="PTHR21058:SF0">
    <property type="entry name" value="6,7-DIMETHYL-8-RIBITYLLUMAZINE SYNTHASE"/>
    <property type="match status" value="1"/>
</dbReference>
<dbReference type="PANTHER" id="PTHR21058">
    <property type="entry name" value="6,7-DIMETHYL-8-RIBITYLLUMAZINE SYNTHASE DMRL SYNTHASE LUMAZINE SYNTHASE"/>
    <property type="match status" value="1"/>
</dbReference>
<dbReference type="Pfam" id="PF00885">
    <property type="entry name" value="DMRL_synthase"/>
    <property type="match status" value="1"/>
</dbReference>
<dbReference type="SUPFAM" id="SSF52121">
    <property type="entry name" value="Lumazine synthase"/>
    <property type="match status" value="1"/>
</dbReference>
<reference key="1">
    <citation type="journal article" date="2011" name="J. Bacteriol.">
        <title>Genome sequence of Thermotoga sp. strain RQ2, a hyperthermophilic bacterium isolated from a geothermally heated region of the seafloor near Ribeira Quente, the Azores.</title>
        <authorList>
            <person name="Swithers K.S."/>
            <person name="DiPippo J.L."/>
            <person name="Bruce D.C."/>
            <person name="Detter C."/>
            <person name="Tapia R."/>
            <person name="Han S."/>
            <person name="Saunders E."/>
            <person name="Goodwin L.A."/>
            <person name="Han J."/>
            <person name="Woyke T."/>
            <person name="Pitluck S."/>
            <person name="Pennacchio L."/>
            <person name="Nolan M."/>
            <person name="Mikhailova N."/>
            <person name="Lykidis A."/>
            <person name="Land M.L."/>
            <person name="Brettin T."/>
            <person name="Stetter K.O."/>
            <person name="Nelson K.E."/>
            <person name="Gogarten J.P."/>
            <person name="Noll K.M."/>
        </authorList>
    </citation>
    <scope>NUCLEOTIDE SEQUENCE [LARGE SCALE GENOMIC DNA]</scope>
    <source>
        <strain>RQ2</strain>
    </source>
</reference>
<gene>
    <name evidence="1" type="primary">ribH</name>
    <name type="ordered locus">TRQ2_0996</name>
</gene>
<protein>
    <recommendedName>
        <fullName evidence="1">6,7-dimethyl-8-ribityllumazine synthase</fullName>
        <shortName evidence="1">DMRL synthase</shortName>
        <shortName evidence="1">LS</shortName>
        <shortName evidence="1">Lumazine synthase</shortName>
        <ecNumber evidence="1">2.5.1.78</ecNumber>
    </recommendedName>
</protein>
<accession>B1LAJ8</accession>
<organism>
    <name type="scientific">Thermotoga sp. (strain RQ2)</name>
    <dbReference type="NCBI Taxonomy" id="126740"/>
    <lineage>
        <taxon>Bacteria</taxon>
        <taxon>Thermotogati</taxon>
        <taxon>Thermotogota</taxon>
        <taxon>Thermotogae</taxon>
        <taxon>Thermotogales</taxon>
        <taxon>Thermotogaceae</taxon>
        <taxon>Thermotoga</taxon>
    </lineage>
</organism>